<comment type="function">
    <text evidence="1">Required for accurate and efficient protein synthesis under certain stress conditions. May act as a fidelity factor of the translation reaction, by catalyzing a one-codon backward translocation of tRNAs on improperly translocated ribosomes. Back-translocation proceeds from a post-translocation (POST) complex to a pre-translocation (PRE) complex, thus giving elongation factor G a second chance to translocate the tRNAs correctly. Binds to ribosomes in a GTP-dependent manner.</text>
</comment>
<comment type="catalytic activity">
    <reaction evidence="1">
        <text>GTP + H2O = GDP + phosphate + H(+)</text>
        <dbReference type="Rhea" id="RHEA:19669"/>
        <dbReference type="ChEBI" id="CHEBI:15377"/>
        <dbReference type="ChEBI" id="CHEBI:15378"/>
        <dbReference type="ChEBI" id="CHEBI:37565"/>
        <dbReference type="ChEBI" id="CHEBI:43474"/>
        <dbReference type="ChEBI" id="CHEBI:58189"/>
        <dbReference type="EC" id="3.6.5.n1"/>
    </reaction>
</comment>
<comment type="subcellular location">
    <subcellularLocation>
        <location evidence="1">Cell inner membrane</location>
        <topology evidence="1">Peripheral membrane protein</topology>
        <orientation evidence="1">Cytoplasmic side</orientation>
    </subcellularLocation>
</comment>
<comment type="similarity">
    <text evidence="1">Belongs to the TRAFAC class translation factor GTPase superfamily. Classic translation factor GTPase family. LepA subfamily.</text>
</comment>
<name>LEPA_SHIBS</name>
<dbReference type="EC" id="3.6.5.n1" evidence="1"/>
<dbReference type="EMBL" id="CP000036">
    <property type="protein sequence ID" value="ABB67140.1"/>
    <property type="molecule type" value="Genomic_DNA"/>
</dbReference>
<dbReference type="RefSeq" id="WP_000790168.1">
    <property type="nucleotide sequence ID" value="NC_007613.1"/>
</dbReference>
<dbReference type="SMR" id="Q31XR8"/>
<dbReference type="GeneID" id="93774522"/>
<dbReference type="KEGG" id="sbo:SBO_2597"/>
<dbReference type="HOGENOM" id="CLU_009995_3_3_6"/>
<dbReference type="Proteomes" id="UP000007067">
    <property type="component" value="Chromosome"/>
</dbReference>
<dbReference type="GO" id="GO:0005886">
    <property type="term" value="C:plasma membrane"/>
    <property type="evidence" value="ECO:0007669"/>
    <property type="project" value="UniProtKB-SubCell"/>
</dbReference>
<dbReference type="GO" id="GO:0005525">
    <property type="term" value="F:GTP binding"/>
    <property type="evidence" value="ECO:0007669"/>
    <property type="project" value="UniProtKB-UniRule"/>
</dbReference>
<dbReference type="GO" id="GO:0003924">
    <property type="term" value="F:GTPase activity"/>
    <property type="evidence" value="ECO:0007669"/>
    <property type="project" value="UniProtKB-UniRule"/>
</dbReference>
<dbReference type="GO" id="GO:0097216">
    <property type="term" value="F:guanosine tetraphosphate binding"/>
    <property type="evidence" value="ECO:0007669"/>
    <property type="project" value="UniProtKB-ARBA"/>
</dbReference>
<dbReference type="GO" id="GO:0043022">
    <property type="term" value="F:ribosome binding"/>
    <property type="evidence" value="ECO:0007669"/>
    <property type="project" value="UniProtKB-UniRule"/>
</dbReference>
<dbReference type="GO" id="GO:0003746">
    <property type="term" value="F:translation elongation factor activity"/>
    <property type="evidence" value="ECO:0007669"/>
    <property type="project" value="UniProtKB-UniRule"/>
</dbReference>
<dbReference type="GO" id="GO:0045727">
    <property type="term" value="P:positive regulation of translation"/>
    <property type="evidence" value="ECO:0007669"/>
    <property type="project" value="UniProtKB-UniRule"/>
</dbReference>
<dbReference type="CDD" id="cd03699">
    <property type="entry name" value="EF4_II"/>
    <property type="match status" value="1"/>
</dbReference>
<dbReference type="CDD" id="cd16260">
    <property type="entry name" value="EF4_III"/>
    <property type="match status" value="1"/>
</dbReference>
<dbReference type="CDD" id="cd01890">
    <property type="entry name" value="LepA"/>
    <property type="match status" value="1"/>
</dbReference>
<dbReference type="CDD" id="cd03709">
    <property type="entry name" value="lepA_C"/>
    <property type="match status" value="1"/>
</dbReference>
<dbReference type="FunFam" id="3.30.70.240:FF:000005">
    <property type="entry name" value="Elongation factor 4"/>
    <property type="match status" value="1"/>
</dbReference>
<dbReference type="FunFam" id="3.40.50.300:FF:000078">
    <property type="entry name" value="Elongation factor 4"/>
    <property type="match status" value="1"/>
</dbReference>
<dbReference type="FunFam" id="2.40.30.10:FF:000015">
    <property type="entry name" value="Translation factor GUF1, mitochondrial"/>
    <property type="match status" value="1"/>
</dbReference>
<dbReference type="FunFam" id="3.30.70.2570:FF:000001">
    <property type="entry name" value="Translation factor GUF1, mitochondrial"/>
    <property type="match status" value="1"/>
</dbReference>
<dbReference type="FunFam" id="3.30.70.870:FF:000004">
    <property type="entry name" value="Translation factor GUF1, mitochondrial"/>
    <property type="match status" value="1"/>
</dbReference>
<dbReference type="Gene3D" id="3.30.70.240">
    <property type="match status" value="1"/>
</dbReference>
<dbReference type="Gene3D" id="3.30.70.2570">
    <property type="entry name" value="Elongation factor 4, C-terminal domain"/>
    <property type="match status" value="1"/>
</dbReference>
<dbReference type="Gene3D" id="3.30.70.870">
    <property type="entry name" value="Elongation Factor G (Translational Gtpase), domain 3"/>
    <property type="match status" value="1"/>
</dbReference>
<dbReference type="Gene3D" id="3.40.50.300">
    <property type="entry name" value="P-loop containing nucleotide triphosphate hydrolases"/>
    <property type="match status" value="1"/>
</dbReference>
<dbReference type="Gene3D" id="2.40.30.10">
    <property type="entry name" value="Translation factors"/>
    <property type="match status" value="1"/>
</dbReference>
<dbReference type="HAMAP" id="MF_00071">
    <property type="entry name" value="LepA"/>
    <property type="match status" value="1"/>
</dbReference>
<dbReference type="InterPro" id="IPR006297">
    <property type="entry name" value="EF-4"/>
</dbReference>
<dbReference type="InterPro" id="IPR035647">
    <property type="entry name" value="EFG_III/V"/>
</dbReference>
<dbReference type="InterPro" id="IPR000640">
    <property type="entry name" value="EFG_V-like"/>
</dbReference>
<dbReference type="InterPro" id="IPR004161">
    <property type="entry name" value="EFTu-like_2"/>
</dbReference>
<dbReference type="InterPro" id="IPR031157">
    <property type="entry name" value="G_TR_CS"/>
</dbReference>
<dbReference type="InterPro" id="IPR038363">
    <property type="entry name" value="LepA_C_sf"/>
</dbReference>
<dbReference type="InterPro" id="IPR013842">
    <property type="entry name" value="LepA_CTD"/>
</dbReference>
<dbReference type="InterPro" id="IPR035654">
    <property type="entry name" value="LepA_IV"/>
</dbReference>
<dbReference type="InterPro" id="IPR027417">
    <property type="entry name" value="P-loop_NTPase"/>
</dbReference>
<dbReference type="InterPro" id="IPR005225">
    <property type="entry name" value="Small_GTP-bd"/>
</dbReference>
<dbReference type="InterPro" id="IPR000795">
    <property type="entry name" value="T_Tr_GTP-bd_dom"/>
</dbReference>
<dbReference type="NCBIfam" id="TIGR01393">
    <property type="entry name" value="lepA"/>
    <property type="match status" value="1"/>
</dbReference>
<dbReference type="NCBIfam" id="TIGR00231">
    <property type="entry name" value="small_GTP"/>
    <property type="match status" value="1"/>
</dbReference>
<dbReference type="PANTHER" id="PTHR43512:SF4">
    <property type="entry name" value="TRANSLATION FACTOR GUF1 HOMOLOG, CHLOROPLASTIC"/>
    <property type="match status" value="1"/>
</dbReference>
<dbReference type="PANTHER" id="PTHR43512">
    <property type="entry name" value="TRANSLATION FACTOR GUF1-RELATED"/>
    <property type="match status" value="1"/>
</dbReference>
<dbReference type="Pfam" id="PF00679">
    <property type="entry name" value="EFG_C"/>
    <property type="match status" value="1"/>
</dbReference>
<dbReference type="Pfam" id="PF00009">
    <property type="entry name" value="GTP_EFTU"/>
    <property type="match status" value="1"/>
</dbReference>
<dbReference type="Pfam" id="PF03144">
    <property type="entry name" value="GTP_EFTU_D2"/>
    <property type="match status" value="1"/>
</dbReference>
<dbReference type="Pfam" id="PF06421">
    <property type="entry name" value="LepA_C"/>
    <property type="match status" value="1"/>
</dbReference>
<dbReference type="PRINTS" id="PR00315">
    <property type="entry name" value="ELONGATNFCT"/>
</dbReference>
<dbReference type="SUPFAM" id="SSF54980">
    <property type="entry name" value="EF-G C-terminal domain-like"/>
    <property type="match status" value="2"/>
</dbReference>
<dbReference type="SUPFAM" id="SSF52540">
    <property type="entry name" value="P-loop containing nucleoside triphosphate hydrolases"/>
    <property type="match status" value="1"/>
</dbReference>
<dbReference type="PROSITE" id="PS00301">
    <property type="entry name" value="G_TR_1"/>
    <property type="match status" value="1"/>
</dbReference>
<dbReference type="PROSITE" id="PS51722">
    <property type="entry name" value="G_TR_2"/>
    <property type="match status" value="1"/>
</dbReference>
<keyword id="KW-0997">Cell inner membrane</keyword>
<keyword id="KW-1003">Cell membrane</keyword>
<keyword id="KW-0342">GTP-binding</keyword>
<keyword id="KW-0378">Hydrolase</keyword>
<keyword id="KW-0472">Membrane</keyword>
<keyword id="KW-0547">Nucleotide-binding</keyword>
<keyword id="KW-0648">Protein biosynthesis</keyword>
<sequence length="599" mass="66570">MKNIRNFSIIAHIDHGKSTLSDRIIQICGGLSDREMEAQVLDSMDLERERGITIKAQSVTLDYKASDGETYQLNFIDTPGHVDFSYEVSRSLAACEGALLVVDAGQGVEAQTLANCYTAMEMDLEVVPVLNKIDLPAADPERVAEEIEDIVGIDATDAVRCSAKTGVGVQDVLERLVRDIPPPEGDPEGPLQALIIDSWFDNYLGVVSLIRIKNGTLRKGDKVKVMSTGQTYNADRLGIFTPKQVDRTELKCGEVGWLVCAIKDIHGAPVGDTLTLARNPAEKALPGFKKVKPQVYAGLFPVSSDDYEAFRDALGKLSLNDASLFYEPESSSALGFGFRCGFLGLLHMEIIQERLEREYDLDLITTAPTVVYEVETTSREVIYVDSPSKLPAVNNIYELREPIAECHMLLPQAYLGNVITLCVEKRGVQTNMVYHGNQVALTYEIPMAEVVLDFFDRLKSTSRGYASLDYNFKRFQASDMVRVDVLINGERVDALALITHRDNSQNRGRELVEKMKDLIPRQQFDIAIQAAIGTHIIARSTVKQLRKNVLAKCYGGDISRKKKLLQKQKEGKKRMKQIGNVELPQEAFLAILHVGKDNK</sequence>
<accession>Q31XR8</accession>
<protein>
    <recommendedName>
        <fullName evidence="1">Elongation factor 4</fullName>
        <shortName evidence="1">EF-4</shortName>
        <ecNumber evidence="1">3.6.5.n1</ecNumber>
    </recommendedName>
    <alternativeName>
        <fullName evidence="1">Ribosomal back-translocase LepA</fullName>
    </alternativeName>
</protein>
<feature type="chain" id="PRO_0000224794" description="Elongation factor 4">
    <location>
        <begin position="1"/>
        <end position="599"/>
    </location>
</feature>
<feature type="domain" description="tr-type G">
    <location>
        <begin position="2"/>
        <end position="184"/>
    </location>
</feature>
<feature type="binding site" evidence="1">
    <location>
        <begin position="14"/>
        <end position="19"/>
    </location>
    <ligand>
        <name>GTP</name>
        <dbReference type="ChEBI" id="CHEBI:37565"/>
    </ligand>
</feature>
<feature type="binding site" evidence="1">
    <location>
        <begin position="131"/>
        <end position="134"/>
    </location>
    <ligand>
        <name>GTP</name>
        <dbReference type="ChEBI" id="CHEBI:37565"/>
    </ligand>
</feature>
<evidence type="ECO:0000255" key="1">
    <source>
        <dbReference type="HAMAP-Rule" id="MF_00071"/>
    </source>
</evidence>
<gene>
    <name evidence="1" type="primary">lepA</name>
    <name type="ordered locus">SBO_2597</name>
</gene>
<reference key="1">
    <citation type="journal article" date="2005" name="Nucleic Acids Res.">
        <title>Genome dynamics and diversity of Shigella species, the etiologic agents of bacillary dysentery.</title>
        <authorList>
            <person name="Yang F."/>
            <person name="Yang J."/>
            <person name="Zhang X."/>
            <person name="Chen L."/>
            <person name="Jiang Y."/>
            <person name="Yan Y."/>
            <person name="Tang X."/>
            <person name="Wang J."/>
            <person name="Xiong Z."/>
            <person name="Dong J."/>
            <person name="Xue Y."/>
            <person name="Zhu Y."/>
            <person name="Xu X."/>
            <person name="Sun L."/>
            <person name="Chen S."/>
            <person name="Nie H."/>
            <person name="Peng J."/>
            <person name="Xu J."/>
            <person name="Wang Y."/>
            <person name="Yuan Z."/>
            <person name="Wen Y."/>
            <person name="Yao Z."/>
            <person name="Shen Y."/>
            <person name="Qiang B."/>
            <person name="Hou Y."/>
            <person name="Yu J."/>
            <person name="Jin Q."/>
        </authorList>
    </citation>
    <scope>NUCLEOTIDE SEQUENCE [LARGE SCALE GENOMIC DNA]</scope>
    <source>
        <strain>Sb227</strain>
    </source>
</reference>
<organism>
    <name type="scientific">Shigella boydii serotype 4 (strain Sb227)</name>
    <dbReference type="NCBI Taxonomy" id="300268"/>
    <lineage>
        <taxon>Bacteria</taxon>
        <taxon>Pseudomonadati</taxon>
        <taxon>Pseudomonadota</taxon>
        <taxon>Gammaproteobacteria</taxon>
        <taxon>Enterobacterales</taxon>
        <taxon>Enterobacteriaceae</taxon>
        <taxon>Shigella</taxon>
    </lineage>
</organism>
<proteinExistence type="inferred from homology"/>